<proteinExistence type="inferred from homology"/>
<name>YIDC_PARD8</name>
<comment type="function">
    <text evidence="1">Required for the insertion and/or proper folding and/or complex formation of integral membrane proteins into the membrane. Involved in integration of membrane proteins that insert both dependently and independently of the Sec translocase complex, as well as at least some lipoproteins. Aids folding of multispanning membrane proteins.</text>
</comment>
<comment type="subunit">
    <text evidence="1">Interacts with the Sec translocase complex via SecD. Specifically interacts with transmembrane segments of nascent integral membrane proteins during membrane integration.</text>
</comment>
<comment type="subcellular location">
    <subcellularLocation>
        <location evidence="1">Cell inner membrane</location>
        <topology evidence="1">Multi-pass membrane protein</topology>
    </subcellularLocation>
</comment>
<comment type="similarity">
    <text evidence="1">Belongs to the OXA1/ALB3/YidC family. Type 1 subfamily.</text>
</comment>
<keyword id="KW-0997">Cell inner membrane</keyword>
<keyword id="KW-1003">Cell membrane</keyword>
<keyword id="KW-0143">Chaperone</keyword>
<keyword id="KW-0472">Membrane</keyword>
<keyword id="KW-0653">Protein transport</keyword>
<keyword id="KW-1185">Reference proteome</keyword>
<keyword id="KW-0812">Transmembrane</keyword>
<keyword id="KW-1133">Transmembrane helix</keyword>
<keyword id="KW-0813">Transport</keyword>
<organism>
    <name type="scientific">Parabacteroides distasonis (strain ATCC 8503 / DSM 20701 / CIP 104284 / JCM 5825 / NCTC 11152)</name>
    <dbReference type="NCBI Taxonomy" id="435591"/>
    <lineage>
        <taxon>Bacteria</taxon>
        <taxon>Pseudomonadati</taxon>
        <taxon>Bacteroidota</taxon>
        <taxon>Bacteroidia</taxon>
        <taxon>Bacteroidales</taxon>
        <taxon>Tannerellaceae</taxon>
        <taxon>Parabacteroides</taxon>
    </lineage>
</organism>
<feature type="chain" id="PRO_1000070130" description="Membrane protein insertase YidC">
    <location>
        <begin position="1"/>
        <end position="633"/>
    </location>
</feature>
<feature type="transmembrane region" description="Helical" evidence="1">
    <location>
        <begin position="3"/>
        <end position="23"/>
    </location>
</feature>
<feature type="transmembrane region" description="Helical" evidence="1">
    <location>
        <begin position="377"/>
        <end position="397"/>
    </location>
</feature>
<feature type="transmembrane region" description="Helical" evidence="1">
    <location>
        <begin position="453"/>
        <end position="473"/>
    </location>
</feature>
<feature type="transmembrane region" description="Helical" evidence="1">
    <location>
        <begin position="499"/>
        <end position="519"/>
    </location>
</feature>
<feature type="transmembrane region" description="Helical" evidence="1">
    <location>
        <begin position="541"/>
        <end position="561"/>
    </location>
</feature>
<feature type="transmembrane region" description="Helical" evidence="1">
    <location>
        <begin position="562"/>
        <end position="582"/>
    </location>
</feature>
<feature type="region of interest" description="Disordered" evidence="2">
    <location>
        <begin position="612"/>
        <end position="633"/>
    </location>
</feature>
<gene>
    <name evidence="1" type="primary">yidC</name>
    <name type="ordered locus">BDI_0520</name>
</gene>
<accession>A6L9D2</accession>
<evidence type="ECO:0000255" key="1">
    <source>
        <dbReference type="HAMAP-Rule" id="MF_01810"/>
    </source>
</evidence>
<evidence type="ECO:0000256" key="2">
    <source>
        <dbReference type="SAM" id="MobiDB-lite"/>
    </source>
</evidence>
<sequence length="633" mass="73243">MDKNTLIGFLLIGVVLFAFSWFNRPTPEQLEAQRRYQDSIAKIEYAQQLELQKQENKSALVEDSLENLPDSVRAQRLQQSFGVFGDAMVGTEDYTTLQNDVVELRISNKGGRICYARLKEYDTYNDEPLVLFDEKESNFNFTLVTATNRVVNTSDLYFTPVKGNDPNSVIMRLNTGEGSHLDFTYTLKPDDYMVQYQILGTGLNGVLAPSTNALDLLWEQDIRQQEKGRKFEDRYVTLNYKFMADDVEHLSESKSDSKQIPNRLKWIGYKDMFFSTVLISQEGFEATTLDSKAIPEGDVLKQFKTTASVPFDLQGKEATNLSFYFGPNKFALLKSFDKGVSAEQQLDLEKLVPLGWGIFRWVNQYFVIPLFDFLGKFIHNYGILILLMTIIVKIILFPLTYKSYMSSAKMRVLRPQVEEINAKYPGQDKAMERQKATMELYSRAGASPMSGCLPMLLQMPILIALFMFFPSAIELRHQSFLWAHDLSTYDAIFSWNKYIPIITPYFGNHISLFCLLMTITNIFYTKYNMEMTNTGQQQMPGMKAMMYMMPLMFLVFFNQYASGLTYYYFISTLITIVQTLIFRYTINEDKLLAKLEANKRKPMKKSGFMKRLEEAQRAQQETLRKQQEAKKKR</sequence>
<reference key="1">
    <citation type="journal article" date="2007" name="PLoS Biol.">
        <title>Evolution of symbiotic bacteria in the distal human intestine.</title>
        <authorList>
            <person name="Xu J."/>
            <person name="Mahowald M.A."/>
            <person name="Ley R.E."/>
            <person name="Lozupone C.A."/>
            <person name="Hamady M."/>
            <person name="Martens E.C."/>
            <person name="Henrissat B."/>
            <person name="Coutinho P.M."/>
            <person name="Minx P."/>
            <person name="Latreille P."/>
            <person name="Cordum H."/>
            <person name="Van Brunt A."/>
            <person name="Kim K."/>
            <person name="Fulton R.S."/>
            <person name="Fulton L.A."/>
            <person name="Clifton S.W."/>
            <person name="Wilson R.K."/>
            <person name="Knight R.D."/>
            <person name="Gordon J.I."/>
        </authorList>
    </citation>
    <scope>NUCLEOTIDE SEQUENCE [LARGE SCALE GENOMIC DNA]</scope>
    <source>
        <strain>ATCC 8503 / DSM 20701 / CIP 104284 / JCM 5825 / NCTC 11152</strain>
    </source>
</reference>
<protein>
    <recommendedName>
        <fullName evidence="1">Membrane protein insertase YidC</fullName>
    </recommendedName>
    <alternativeName>
        <fullName evidence="1">Foldase YidC</fullName>
    </alternativeName>
    <alternativeName>
        <fullName evidence="1">Membrane integrase YidC</fullName>
    </alternativeName>
    <alternativeName>
        <fullName evidence="1">Membrane protein YidC</fullName>
    </alternativeName>
</protein>
<dbReference type="EMBL" id="CP000140">
    <property type="protein sequence ID" value="ABR42296.1"/>
    <property type="molecule type" value="Genomic_DNA"/>
</dbReference>
<dbReference type="RefSeq" id="WP_005855674.1">
    <property type="nucleotide sequence ID" value="NC_009615.1"/>
</dbReference>
<dbReference type="SMR" id="A6L9D2"/>
<dbReference type="STRING" id="435591.BDI_0520"/>
<dbReference type="PaxDb" id="435591-BDI_0520"/>
<dbReference type="KEGG" id="pdi:BDI_0520"/>
<dbReference type="eggNOG" id="COG0706">
    <property type="taxonomic scope" value="Bacteria"/>
</dbReference>
<dbReference type="HOGENOM" id="CLU_016535_2_0_10"/>
<dbReference type="BioCyc" id="PDIS435591:G1G5A-535-MONOMER"/>
<dbReference type="Proteomes" id="UP000000566">
    <property type="component" value="Chromosome"/>
</dbReference>
<dbReference type="GO" id="GO:0005886">
    <property type="term" value="C:plasma membrane"/>
    <property type="evidence" value="ECO:0007669"/>
    <property type="project" value="UniProtKB-SubCell"/>
</dbReference>
<dbReference type="GO" id="GO:0032977">
    <property type="term" value="F:membrane insertase activity"/>
    <property type="evidence" value="ECO:0007669"/>
    <property type="project" value="InterPro"/>
</dbReference>
<dbReference type="GO" id="GO:0051205">
    <property type="term" value="P:protein insertion into membrane"/>
    <property type="evidence" value="ECO:0007669"/>
    <property type="project" value="TreeGrafter"/>
</dbReference>
<dbReference type="GO" id="GO:0015031">
    <property type="term" value="P:protein transport"/>
    <property type="evidence" value="ECO:0007669"/>
    <property type="project" value="UniProtKB-KW"/>
</dbReference>
<dbReference type="CDD" id="cd20070">
    <property type="entry name" value="5TM_YidC_Alb3"/>
    <property type="match status" value="1"/>
</dbReference>
<dbReference type="CDD" id="cd19961">
    <property type="entry name" value="EcYidC-like_peri"/>
    <property type="match status" value="1"/>
</dbReference>
<dbReference type="Gene3D" id="2.70.98.90">
    <property type="match status" value="1"/>
</dbReference>
<dbReference type="HAMAP" id="MF_01810">
    <property type="entry name" value="YidC_type1"/>
    <property type="match status" value="1"/>
</dbReference>
<dbReference type="InterPro" id="IPR019998">
    <property type="entry name" value="Membr_insert_YidC"/>
</dbReference>
<dbReference type="InterPro" id="IPR028053">
    <property type="entry name" value="Membr_insert_YidC_N"/>
</dbReference>
<dbReference type="InterPro" id="IPR001708">
    <property type="entry name" value="YidC/ALB3/OXA1/COX18"/>
</dbReference>
<dbReference type="InterPro" id="IPR028055">
    <property type="entry name" value="YidC/Oxa/ALB_C"/>
</dbReference>
<dbReference type="InterPro" id="IPR047196">
    <property type="entry name" value="YidC_ALB_C"/>
</dbReference>
<dbReference type="InterPro" id="IPR038221">
    <property type="entry name" value="YidC_periplasmic_sf"/>
</dbReference>
<dbReference type="NCBIfam" id="NF002356">
    <property type="entry name" value="PRK01318.2-3"/>
    <property type="match status" value="1"/>
</dbReference>
<dbReference type="NCBIfam" id="TIGR03593">
    <property type="entry name" value="yidC_nterm"/>
    <property type="match status" value="1"/>
</dbReference>
<dbReference type="NCBIfam" id="TIGR03592">
    <property type="entry name" value="yidC_oxa1_cterm"/>
    <property type="match status" value="1"/>
</dbReference>
<dbReference type="PANTHER" id="PTHR12428:SF65">
    <property type="entry name" value="CYTOCHROME C OXIDASE ASSEMBLY PROTEIN COX18, MITOCHONDRIAL"/>
    <property type="match status" value="1"/>
</dbReference>
<dbReference type="PANTHER" id="PTHR12428">
    <property type="entry name" value="OXA1"/>
    <property type="match status" value="1"/>
</dbReference>
<dbReference type="Pfam" id="PF02096">
    <property type="entry name" value="60KD_IMP"/>
    <property type="match status" value="1"/>
</dbReference>
<dbReference type="Pfam" id="PF14849">
    <property type="entry name" value="YidC_periplas"/>
    <property type="match status" value="1"/>
</dbReference>
<dbReference type="PRINTS" id="PR00701">
    <property type="entry name" value="60KDINNERMP"/>
</dbReference>